<reference key="1">
    <citation type="journal article" date="1995" name="J. Biol. Chem.">
        <title>The M(r) = 8,000 and 11,000 outer arm dynein light chains from Chlamydomonas flagella have cytoplasmic homologues.</title>
        <authorList>
            <person name="King S.M."/>
            <person name="Patel-King R.S."/>
        </authorList>
    </citation>
    <scope>NUCLEOTIDE SEQUENCE [MRNA]</scope>
    <scope>PROTEIN SEQUENCE OF 7-16 AND 100-109</scope>
    <source>
        <strain>1132D</strain>
    </source>
</reference>
<protein>
    <recommendedName>
        <fullName>Dynein 11 kDa light chain, flagellar outer arm</fullName>
    </recommendedName>
</protein>
<feature type="chain" id="PRO_0000195142" description="Dynein 11 kDa light chain, flagellar outer arm">
    <location>
        <begin position="1"/>
        <end position="120"/>
    </location>
</feature>
<organism>
    <name type="scientific">Chlamydomonas reinhardtii</name>
    <name type="common">Chlamydomonas smithii</name>
    <dbReference type="NCBI Taxonomy" id="3055"/>
    <lineage>
        <taxon>Eukaryota</taxon>
        <taxon>Viridiplantae</taxon>
        <taxon>Chlorophyta</taxon>
        <taxon>core chlorophytes</taxon>
        <taxon>Chlorophyceae</taxon>
        <taxon>CS clade</taxon>
        <taxon>Chlamydomonadales</taxon>
        <taxon>Chlamydomonadaceae</taxon>
        <taxon>Chlamydomonas</taxon>
    </lineage>
</organism>
<comment type="subunit">
    <text>Consists of at least 3 heavy chains (alpha, beta and gamma), 2 intermediate chains and 8 light chains.</text>
</comment>
<comment type="subcellular location">
    <subcellularLocation>
        <location>Cytoplasm</location>
        <location>Cytoskeleton</location>
        <location>Flagellum axoneme</location>
    </subcellularLocation>
</comment>
<comment type="similarity">
    <text evidence="1">Belongs to the dynein light chain family.</text>
</comment>
<proteinExistence type="evidence at protein level"/>
<accession>Q39579</accession>
<sequence length="120" mass="13857">MADEKEQQGEQGYQLQSQHFYKIITSYMPESFEQDAVQIALIAVDKYRQLKDIAFYIKHEYDKKYPGSGKATEGVYHCIVGKSFASAVSHETRQFIHMKVDTYHVILWKSKDTPFTPGGE</sequence>
<evidence type="ECO:0000305" key="1"/>
<keyword id="KW-0002">3D-structure</keyword>
<keyword id="KW-0966">Cell projection</keyword>
<keyword id="KW-0969">Cilium</keyword>
<keyword id="KW-0963">Cytoplasm</keyword>
<keyword id="KW-0206">Cytoskeleton</keyword>
<keyword id="KW-0903">Direct protein sequencing</keyword>
<keyword id="KW-0243">Dynein</keyword>
<keyword id="KW-0282">Flagellum</keyword>
<keyword id="KW-0493">Microtubule</keyword>
<keyword id="KW-0505">Motor protein</keyword>
<name>DYL2_CHLRE</name>
<dbReference type="EMBL" id="U19484">
    <property type="protein sequence ID" value="AAA80216.1"/>
    <property type="molecule type" value="mRNA"/>
</dbReference>
<dbReference type="PIR" id="B56444">
    <property type="entry name" value="B56444"/>
</dbReference>
<dbReference type="RefSeq" id="XP_001692012.1">
    <property type="nucleotide sequence ID" value="XM_001691960.2"/>
</dbReference>
<dbReference type="PDB" id="7KZM">
    <property type="method" value="EM"/>
    <property type="resolution" value="7.50 A"/>
    <property type="chains" value="H=1-120"/>
</dbReference>
<dbReference type="PDB" id="7KZN">
    <property type="method" value="EM"/>
    <property type="resolution" value="4.00 A"/>
    <property type="chains" value="H=1-120"/>
</dbReference>
<dbReference type="PDB" id="8GLV">
    <property type="method" value="EM"/>
    <property type="resolution" value="3.10 A"/>
    <property type="chains" value="BE/BP/GM/LA/Lz=1-120"/>
</dbReference>
<dbReference type="PDBsum" id="7KZM"/>
<dbReference type="PDBsum" id="7KZN"/>
<dbReference type="PDBsum" id="8GLV"/>
<dbReference type="EMDB" id="EMD-23082"/>
<dbReference type="EMDB" id="EMD-23083"/>
<dbReference type="EMDB" id="EMD-40220"/>
<dbReference type="SMR" id="Q39579"/>
<dbReference type="PaxDb" id="3055-EDP04502"/>
<dbReference type="EnsemblPlants" id="PNW85455">
    <property type="protein sequence ID" value="PNW85455"/>
    <property type="gene ID" value="CHLRE_03g187200v5"/>
</dbReference>
<dbReference type="GeneID" id="5717469"/>
<dbReference type="Gramene" id="PNW85455">
    <property type="protein sequence ID" value="PNW85455"/>
    <property type="gene ID" value="CHLRE_03g187200v5"/>
</dbReference>
<dbReference type="KEGG" id="cre:CHLRE_03g187200v5"/>
<dbReference type="eggNOG" id="KOG3430">
    <property type="taxonomic scope" value="Eukaryota"/>
</dbReference>
<dbReference type="HOGENOM" id="CLU_070944_2_1_1"/>
<dbReference type="OMA" id="SHETRQF"/>
<dbReference type="OrthoDB" id="10033309at2759"/>
<dbReference type="GO" id="GO:0005737">
    <property type="term" value="C:cytoplasm"/>
    <property type="evidence" value="ECO:0007669"/>
    <property type="project" value="UniProtKB-KW"/>
</dbReference>
<dbReference type="GO" id="GO:0030286">
    <property type="term" value="C:dynein complex"/>
    <property type="evidence" value="ECO:0007669"/>
    <property type="project" value="UniProtKB-KW"/>
</dbReference>
<dbReference type="GO" id="GO:0005874">
    <property type="term" value="C:microtubule"/>
    <property type="evidence" value="ECO:0007669"/>
    <property type="project" value="UniProtKB-KW"/>
</dbReference>
<dbReference type="GO" id="GO:0031514">
    <property type="term" value="C:motile cilium"/>
    <property type="evidence" value="ECO:0007669"/>
    <property type="project" value="UniProtKB-KW"/>
</dbReference>
<dbReference type="GO" id="GO:0007017">
    <property type="term" value="P:microtubule-based process"/>
    <property type="evidence" value="ECO:0007669"/>
    <property type="project" value="InterPro"/>
</dbReference>
<dbReference type="FunFam" id="3.30.740.10:FF:000019">
    <property type="match status" value="1"/>
</dbReference>
<dbReference type="Gene3D" id="3.30.740.10">
    <property type="entry name" value="Protein Inhibitor Of Neuronal Nitric Oxide Synthase"/>
    <property type="match status" value="1"/>
</dbReference>
<dbReference type="InterPro" id="IPR037177">
    <property type="entry name" value="DLC_sf"/>
</dbReference>
<dbReference type="InterPro" id="IPR019763">
    <property type="entry name" value="Dynein_light_1/2_CS"/>
</dbReference>
<dbReference type="InterPro" id="IPR001372">
    <property type="entry name" value="Dynein_light_chain_typ-1/2"/>
</dbReference>
<dbReference type="PANTHER" id="PTHR11886">
    <property type="entry name" value="DYNEIN LIGHT CHAIN"/>
    <property type="match status" value="1"/>
</dbReference>
<dbReference type="PANTHER" id="PTHR11886:SF35">
    <property type="entry name" value="DYNEIN LIGHT CHAIN"/>
    <property type="match status" value="1"/>
</dbReference>
<dbReference type="Pfam" id="PF01221">
    <property type="entry name" value="Dynein_light"/>
    <property type="match status" value="1"/>
</dbReference>
<dbReference type="SMART" id="SM01375">
    <property type="entry name" value="Dynein_light"/>
    <property type="match status" value="1"/>
</dbReference>
<dbReference type="SUPFAM" id="SSF54648">
    <property type="entry name" value="DLC"/>
    <property type="match status" value="1"/>
</dbReference>
<dbReference type="PROSITE" id="PS01239">
    <property type="entry name" value="DYNEIN_LIGHT_1"/>
    <property type="match status" value="1"/>
</dbReference>